<accession>P49274</accession>
<accession>Q9Y197</accession>
<proteinExistence type="evidence at protein level"/>
<sequence length="496" mass="57150">KYHNPHFIGNRSVITHLMEWKYDDIGDECERFLGPYGYGGVQVSPVNEHAILDRRPWYERYQPVSYDIRTRSGDEQQFRRMVKRCNKAGVRIYVDIVLNHMTGAQSGKGTNGHHYDGNTLQYPGVPFGPNDFHGHESCPTQDLEIHDYTNPKEARNCRLSGLRDLKQQSEYVRQKQVDFLNHLIDIGVAGFRSDASTHQWPDDLRSIYSRLHNLNKEFFPENSQPFIYHETIYYGGNGINSNEYTSLGRIIEFRFYKEITNVFRGNNPLHWLKNFGTEWGLVPSGDALVMIDSHDLRVGHTGKLGFNINCFEGRLLKAATAFMLAWNYGVPRVMSSYFWNQIIKDGKDVNDWVGPPSDKNGNILSVHPNPDMTCNHEWICEHRWREIYNMVKFRMIAGQEPVHNWWDNGDYQIAFSRGNRAFIAINLQKNQQNLQQKLHTGLPAGTYCDIISGNLIDNKCTGKSIHVDKNGQADVYVGHDEFDAFVAYHIGARIVS</sequence>
<feature type="chain" id="PRO_0000054284" description="Alpha-amylase">
    <location>
        <begin position="1" status="less than"/>
        <end position="496"/>
    </location>
</feature>
<feature type="active site" description="Nucleophile" evidence="2">
    <location>
        <position position="194"/>
    </location>
</feature>
<feature type="active site" description="Proton donor" evidence="2">
    <location>
        <position position="230"/>
    </location>
</feature>
<feature type="binding site" evidence="2">
    <location>
        <position position="99"/>
    </location>
    <ligand>
        <name>Ca(2+)</name>
        <dbReference type="ChEBI" id="CHEBI:29108"/>
    </ligand>
</feature>
<feature type="binding site" evidence="2">
    <location>
        <position position="155"/>
    </location>
    <ligand>
        <name>Ca(2+)</name>
        <dbReference type="ChEBI" id="CHEBI:29108"/>
    </ligand>
</feature>
<feature type="binding site" evidence="2">
    <location>
        <position position="164"/>
    </location>
    <ligand>
        <name>Ca(2+)</name>
        <dbReference type="ChEBI" id="CHEBI:29108"/>
    </ligand>
</feature>
<feature type="binding site" evidence="2">
    <location>
        <position position="192"/>
    </location>
    <ligand>
        <name>chloride</name>
        <dbReference type="ChEBI" id="CHEBI:17996"/>
    </ligand>
</feature>
<feature type="binding site" evidence="2">
    <location>
        <position position="198"/>
    </location>
    <ligand>
        <name>Ca(2+)</name>
        <dbReference type="ChEBI" id="CHEBI:29108"/>
    </ligand>
</feature>
<feature type="binding site" evidence="2">
    <location>
        <position position="332"/>
    </location>
    <ligand>
        <name>chloride</name>
        <dbReference type="ChEBI" id="CHEBI:17996"/>
    </ligand>
</feature>
<feature type="site" description="Transition state stabilizer" evidence="1">
    <location>
        <position position="295"/>
    </location>
</feature>
<feature type="disulfide bond" evidence="2">
    <location>
        <begin position="29"/>
        <end position="85"/>
    </location>
</feature>
<feature type="disulfide bond" evidence="2">
    <location>
        <begin position="374"/>
        <end position="380"/>
    </location>
</feature>
<feature type="disulfide bond" evidence="2">
    <location>
        <begin position="448"/>
        <end position="460"/>
    </location>
</feature>
<feature type="non-terminal residue" evidence="14">
    <location>
        <position position="1"/>
    </location>
</feature>
<name>AMY_DERPT</name>
<organism>
    <name type="scientific">Dermatophagoides pteronyssinus</name>
    <name type="common">European house dust mite</name>
    <dbReference type="NCBI Taxonomy" id="6956"/>
    <lineage>
        <taxon>Eukaryota</taxon>
        <taxon>Metazoa</taxon>
        <taxon>Ecdysozoa</taxon>
        <taxon>Arthropoda</taxon>
        <taxon>Chelicerata</taxon>
        <taxon>Arachnida</taxon>
        <taxon>Acari</taxon>
        <taxon>Acariformes</taxon>
        <taxon>Sarcoptiformes</taxon>
        <taxon>Astigmata</taxon>
        <taxon>Psoroptidia</taxon>
        <taxon>Analgoidea</taxon>
        <taxon>Pyroglyphidae</taxon>
        <taxon>Dermatophagoidinae</taxon>
        <taxon>Dermatophagoides</taxon>
    </lineage>
</organism>
<dbReference type="EC" id="3.2.1.1" evidence="6 9"/>
<dbReference type="EMBL" id="AF144060">
    <property type="protein sequence ID" value="AAD38942.1"/>
    <property type="molecule type" value="mRNA"/>
</dbReference>
<dbReference type="PIR" id="A39729">
    <property type="entry name" value="A39729"/>
</dbReference>
<dbReference type="SMR" id="P49274"/>
<dbReference type="FunCoup" id="P49274">
    <property type="interactions" value="54"/>
</dbReference>
<dbReference type="Allergome" id="318">
    <property type="allergen name" value="Der p 4"/>
</dbReference>
<dbReference type="Allergome" id="3264">
    <property type="allergen name" value="Der p 4.0101"/>
</dbReference>
<dbReference type="CAZy" id="GH13">
    <property type="family name" value="Glycoside Hydrolase Family 13"/>
</dbReference>
<dbReference type="EnsemblMetazoa" id="XM_027350563.1">
    <property type="protein sequence ID" value="XP_027206364.1"/>
    <property type="gene ID" value="LOC113799864"/>
</dbReference>
<dbReference type="InParanoid" id="P49274"/>
<dbReference type="OrthoDB" id="550577at2759"/>
<dbReference type="Proteomes" id="UP000515146">
    <property type="component" value="Unplaced"/>
</dbReference>
<dbReference type="GO" id="GO:0005576">
    <property type="term" value="C:extracellular region"/>
    <property type="evidence" value="ECO:0000314"/>
    <property type="project" value="UniProtKB"/>
</dbReference>
<dbReference type="GO" id="GO:0004556">
    <property type="term" value="F:alpha-amylase activity"/>
    <property type="evidence" value="ECO:0000314"/>
    <property type="project" value="UniProtKB"/>
</dbReference>
<dbReference type="GO" id="GO:0005509">
    <property type="term" value="F:calcium ion binding"/>
    <property type="evidence" value="ECO:0000250"/>
    <property type="project" value="UniProtKB"/>
</dbReference>
<dbReference type="GO" id="GO:0031404">
    <property type="term" value="F:chloride ion binding"/>
    <property type="evidence" value="ECO:0000250"/>
    <property type="project" value="UniProtKB"/>
</dbReference>
<dbReference type="GO" id="GO:0009313">
    <property type="term" value="P:oligosaccharide catabolic process"/>
    <property type="evidence" value="ECO:0000314"/>
    <property type="project" value="UniProtKB"/>
</dbReference>
<dbReference type="CDD" id="cd11317">
    <property type="entry name" value="AmyAc_bac_euk_AmyA"/>
    <property type="match status" value="1"/>
</dbReference>
<dbReference type="Gene3D" id="3.20.20.80">
    <property type="entry name" value="Glycosidases"/>
    <property type="match status" value="1"/>
</dbReference>
<dbReference type="Gene3D" id="2.60.40.1180">
    <property type="entry name" value="Golgi alpha-mannosidase II"/>
    <property type="match status" value="1"/>
</dbReference>
<dbReference type="InterPro" id="IPR006048">
    <property type="entry name" value="A-amylase/branching_C"/>
</dbReference>
<dbReference type="InterPro" id="IPR031319">
    <property type="entry name" value="A-amylase_C"/>
</dbReference>
<dbReference type="InterPro" id="IPR006046">
    <property type="entry name" value="Alpha_amylase"/>
</dbReference>
<dbReference type="InterPro" id="IPR006047">
    <property type="entry name" value="Glyco_hydro_13_cat_dom"/>
</dbReference>
<dbReference type="InterPro" id="IPR013780">
    <property type="entry name" value="Glyco_hydro_b"/>
</dbReference>
<dbReference type="InterPro" id="IPR017853">
    <property type="entry name" value="Glycoside_hydrolase_SF"/>
</dbReference>
<dbReference type="PANTHER" id="PTHR43447">
    <property type="entry name" value="ALPHA-AMYLASE"/>
    <property type="match status" value="1"/>
</dbReference>
<dbReference type="Pfam" id="PF00128">
    <property type="entry name" value="Alpha-amylase"/>
    <property type="match status" value="1"/>
</dbReference>
<dbReference type="Pfam" id="PF02806">
    <property type="entry name" value="Alpha-amylase_C"/>
    <property type="match status" value="1"/>
</dbReference>
<dbReference type="PRINTS" id="PR00110">
    <property type="entry name" value="ALPHAAMYLASE"/>
</dbReference>
<dbReference type="SMART" id="SM00642">
    <property type="entry name" value="Aamy"/>
    <property type="match status" value="1"/>
</dbReference>
<dbReference type="SMART" id="SM00632">
    <property type="entry name" value="Aamy_C"/>
    <property type="match status" value="1"/>
</dbReference>
<dbReference type="SUPFAM" id="SSF51445">
    <property type="entry name" value="(Trans)glycosidases"/>
    <property type="match status" value="1"/>
</dbReference>
<dbReference type="SUPFAM" id="SSF51011">
    <property type="entry name" value="Glycosyl hydrolase domain"/>
    <property type="match status" value="1"/>
</dbReference>
<protein>
    <recommendedName>
        <fullName evidence="4 10 12">Alpha-amylase</fullName>
        <ecNumber evidence="6 9">3.2.1.1</ecNumber>
    </recommendedName>
    <alternativeName>
        <fullName evidence="13">1,4-alpha-D-glucan glucanohydrolase</fullName>
    </alternativeName>
    <alternativeName>
        <fullName evidence="11">Allergen Der p IV</fullName>
    </alternativeName>
    <alternativeName>
        <fullName evidence="10">Mite group 4 allergen Der p 4</fullName>
    </alternativeName>
    <allergenName evidence="13">Der p 4.0101</allergenName>
</protein>
<evidence type="ECO:0000250" key="1">
    <source>
        <dbReference type="UniProtKB" id="P04746"/>
    </source>
</evidence>
<evidence type="ECO:0000250" key="2">
    <source>
        <dbReference type="UniProtKB" id="P56634"/>
    </source>
</evidence>
<evidence type="ECO:0000255" key="3">
    <source>
        <dbReference type="RuleBase" id="RU003615"/>
    </source>
</evidence>
<evidence type="ECO:0000255" key="4">
    <source>
        <dbReference type="RuleBase" id="RU361134"/>
    </source>
</evidence>
<evidence type="ECO:0000269" key="5">
    <source>
    </source>
</evidence>
<evidence type="ECO:0000269" key="6">
    <source>
    </source>
</evidence>
<evidence type="ECO:0000269" key="7">
    <source>
    </source>
</evidence>
<evidence type="ECO:0000269" key="8">
    <source>
    </source>
</evidence>
<evidence type="ECO:0000269" key="9">
    <source>
    </source>
</evidence>
<evidence type="ECO:0000303" key="10">
    <source>
    </source>
</evidence>
<evidence type="ECO:0000303" key="11">
    <source>
    </source>
</evidence>
<evidence type="ECO:0000303" key="12">
    <source>
    </source>
</evidence>
<evidence type="ECO:0000305" key="13"/>
<evidence type="ECO:0000312" key="14">
    <source>
        <dbReference type="EMBL" id="AAD38942.1"/>
    </source>
</evidence>
<comment type="function">
    <text>Aids in the digestion of starch and glycogen derived from food, such as skin scales, fungi and bacteria.</text>
</comment>
<comment type="catalytic activity">
    <reaction evidence="6 9">
        <text>Endohydrolysis of (1-&gt;4)-alpha-D-glucosidic linkages in polysaccharides containing three or more (1-&gt;4)-alpha-linked D-glucose units.</text>
        <dbReference type="EC" id="3.2.1.1"/>
    </reaction>
</comment>
<comment type="cofactor">
    <cofactor evidence="2">
        <name>Ca(2+)</name>
        <dbReference type="ChEBI" id="CHEBI:29108"/>
    </cofactor>
    <text evidence="2">Binds 1 Ca(2+) ion per subunit.</text>
</comment>
<comment type="cofactor">
    <cofactor evidence="2">
        <name>chloride</name>
        <dbReference type="ChEBI" id="CHEBI:17996"/>
    </cofactor>
    <text evidence="2">Binds 1 Cl(-) ion per subunit.</text>
</comment>
<comment type="activity regulation">
    <text evidence="9">Inhibited by alpha-amylase inhibitors from wheat and rye. The most effective inhibitors are the wheat tetrameric alpha-amylase inhibitor (WTAI) and the rye dimeric alpha-amylase inhibitor (RDAI-1). Not inhibited by alpha-amylase inhibitor from barley.</text>
</comment>
<comment type="biophysicochemical properties">
    <phDependence>
        <text evidence="6">Optimum pH is 6.4.</text>
    </phDependence>
</comment>
<comment type="subunit">
    <text evidence="2">Monomer.</text>
</comment>
<comment type="subcellular location">
    <subcellularLocation>
        <location evidence="5 6 7 9">Secreted</location>
    </subcellularLocation>
</comment>
<comment type="PTM">
    <text evidence="6">Disulfide bonds are present.</text>
</comment>
<comment type="allergen">
    <text evidence="5 6 8 13">Causes an allergic reaction in human (PubMed:10545763, PubMed:1710630, PubMed:17845417). Binds to IgE in 30% of the 10 patients tested allergic to D.pteronyssinus, the European house dust mite (HDM) (PubMed:10545763). Binds to IgE in 46% of the 27 adults and in 25% of the 20 children tested allergic to mites (PubMed:1710630). The IgE of the mite-atopic tropical Australian Aboriginal patients binds unusually mainly to this protein, whereas this protein is a minor allergen in mite-atopic urban patients from Perth, including three patients of Aboriginal origin. IgE-binding to this protein is not the result of cross-reactivity to another amylase in these patients since IgE-binding to the extract from Culicoides, the biting midges common in the north west of Western Australia, is negative, as is the IgE-binding to the major allergen of B.tropicalis, a prevalent mite in the tropics. It is also unlikely that the IgE is induced by parasites, because parasitic infections also induce IgG4 antibody, which is mostly absent in the atopic Aboriginal population, although antibody to the Der p 4 allergen is occasionally detected. The amylases in mollusks could potentially be sensitizing, but mollusks are rarely consumed in the Aboriginal community (PubMed:17845417). The allergenicity of this protein is dependent on the presence of the disulfide bonds (PubMed:1710630). Common symptoms of mite allergy are bronchial asthma, allergic rhinitis and conjunctivitis (Probable).</text>
</comment>
<comment type="similarity">
    <text evidence="3 13">Belongs to the glycosyl hydrolase 13 family.</text>
</comment>
<keyword id="KW-0020">Allergen</keyword>
<keyword id="KW-0106">Calcium</keyword>
<keyword id="KW-0119">Carbohydrate metabolism</keyword>
<keyword id="KW-0868">Chloride</keyword>
<keyword id="KW-0903">Direct protein sequencing</keyword>
<keyword id="KW-1015">Disulfide bond</keyword>
<keyword id="KW-0326">Glycosidase</keyword>
<keyword id="KW-0378">Hydrolase</keyword>
<keyword id="KW-0479">Metal-binding</keyword>
<keyword id="KW-1185">Reference proteome</keyword>
<keyword id="KW-0964">Secreted</keyword>
<reference evidence="14" key="1">
    <citation type="journal article" date="1999" name="Int. Arch. Allergy Immunol.">
        <title>Molecular characterization of the group 4 house dust mite allergen from Dermatophagoides pteronyssinus and its amylase homologue from Euroglyphus maynei.</title>
        <authorList>
            <person name="Mills K.L."/>
            <person name="Hart B.J."/>
            <person name="Lynch N.R."/>
            <person name="Thomas W.R."/>
            <person name="Smith W."/>
        </authorList>
    </citation>
    <scope>NUCLEOTIDE SEQUENCE [MRNA]</scope>
    <scope>SUBCELLULAR LOCATION</scope>
    <scope>ALLERGEN</scope>
</reference>
<reference key="2">
    <citation type="journal article" date="1991" name="Int. Arch. Allergy Appl. Immunol.">
        <title>Allergenicity and physicochemical characterization of house dust mite derived amylase.</title>
        <authorList>
            <person name="Lake F.R."/>
            <person name="Ward L.D."/>
            <person name="Simpson R.J."/>
            <person name="Thompson P.J."/>
            <person name="Stewart G.A."/>
        </authorList>
    </citation>
    <scope>PROTEIN SEQUENCE OF 1-19</scope>
    <scope>SUBCELLULAR LOCATION</scope>
</reference>
<reference key="3">
    <citation type="journal article" date="1991" name="J. Allergy Clin. Immunol.">
        <title>House dust mite-derived amylase: allergenicity and physicochemical characterization.</title>
        <authorList>
            <person name="Lake F.R."/>
            <person name="Ward L.D."/>
            <person name="Simpson R.J."/>
            <person name="Thompson P.J."/>
            <person name="Stewart G.A."/>
        </authorList>
    </citation>
    <scope>PROTEIN SEQUENCE OF 1-19</scope>
    <scope>CATALYTIC ACTIVITY</scope>
    <scope>BIOPHYSICOCHEMICAL PROPERTIES</scope>
    <scope>SUBCELLULAR LOCATION</scope>
    <scope>ALLERGEN</scope>
    <scope>PRESENCE OF DISULFIDE BONDS</scope>
</reference>
<reference key="4">
    <citation type="journal article" date="1996" name="Allergy">
        <title>Interaction of allergens from house-dust mite and from cereal flours: Dermatophagoides pteronyssinus alpha-amylase (Der p 4) and wheat and rye alpha-amylase inhibitors.</title>
        <authorList>
            <person name="Sanchez-Monge R."/>
            <person name="Garcia-Casado G."/>
            <person name="Barber D."/>
            <person name="Salcedo G."/>
        </authorList>
    </citation>
    <scope>CATALYTIC ACTIVITY</scope>
    <scope>ACTIVITY REGULATION</scope>
    <scope>SUBCELLULAR LOCATION</scope>
</reference>
<reference key="5">
    <citation type="journal article" date="2007" name="Clin. Exp. Allergy">
        <title>Distinctive immunoglobulin E anti-house dust allergen-binding specificities in a tropical Australian Aboriginal community.</title>
        <authorList>
            <person name="Hales B.J."/>
            <person name="Laing I.A."/>
            <person name="Pearce L.J."/>
            <person name="Hazell L.A."/>
            <person name="Mills K.L."/>
            <person name="Chua K.Y."/>
            <person name="Thornton R.B."/>
            <person name="Richmond P."/>
            <person name="Musk A.W."/>
            <person name="James A.L."/>
            <person name="Lesouef P.N."/>
            <person name="Thomas W.R."/>
        </authorList>
    </citation>
    <scope>ALLERGEN</scope>
</reference>